<evidence type="ECO:0000255" key="1">
    <source>
        <dbReference type="HAMAP-Rule" id="MF_01526"/>
    </source>
</evidence>
<organism>
    <name type="scientific">Streptococcus pneumoniae (strain ATCC BAA-255 / R6)</name>
    <dbReference type="NCBI Taxonomy" id="171101"/>
    <lineage>
        <taxon>Bacteria</taxon>
        <taxon>Bacillati</taxon>
        <taxon>Bacillota</taxon>
        <taxon>Bacilli</taxon>
        <taxon>Lactobacillales</taxon>
        <taxon>Streptococcaceae</taxon>
        <taxon>Streptococcus</taxon>
    </lineage>
</organism>
<protein>
    <recommendedName>
        <fullName evidence="1">UPF0342 protein spr1230</fullName>
    </recommendedName>
</protein>
<gene>
    <name type="ordered locus">spr1230</name>
</gene>
<name>Y1230_STRR6</name>
<feature type="chain" id="PRO_0000109995" description="UPF0342 protein spr1230">
    <location>
        <begin position="1"/>
        <end position="112"/>
    </location>
</feature>
<dbReference type="EMBL" id="AE007317">
    <property type="protein sequence ID" value="AAL00034.1"/>
    <property type="molecule type" value="Genomic_DNA"/>
</dbReference>
<dbReference type="PIR" id="E98025">
    <property type="entry name" value="E98025"/>
</dbReference>
<dbReference type="RefSeq" id="NP_358823.1">
    <property type="nucleotide sequence ID" value="NC_003098.1"/>
</dbReference>
<dbReference type="RefSeq" id="WP_000065990.1">
    <property type="nucleotide sequence ID" value="NC_003098.1"/>
</dbReference>
<dbReference type="SMR" id="Q8DPD3"/>
<dbReference type="STRING" id="171101.spr1230"/>
<dbReference type="KEGG" id="spr:spr1230"/>
<dbReference type="PATRIC" id="fig|171101.6.peg.1336"/>
<dbReference type="eggNOG" id="COG3679">
    <property type="taxonomic scope" value="Bacteria"/>
</dbReference>
<dbReference type="HOGENOM" id="CLU_140243_2_0_9"/>
<dbReference type="Proteomes" id="UP000000586">
    <property type="component" value="Chromosome"/>
</dbReference>
<dbReference type="Gene3D" id="1.20.1500.10">
    <property type="entry name" value="YheA/YmcA-like"/>
    <property type="match status" value="1"/>
</dbReference>
<dbReference type="HAMAP" id="MF_01526">
    <property type="entry name" value="UPF0342"/>
    <property type="match status" value="1"/>
</dbReference>
<dbReference type="InterPro" id="IPR010368">
    <property type="entry name" value="Com_YlbF"/>
</dbReference>
<dbReference type="InterPro" id="IPR023378">
    <property type="entry name" value="YheA/YmcA-like_dom_sf"/>
</dbReference>
<dbReference type="NCBIfam" id="NF010209">
    <property type="entry name" value="PRK13676.1-1"/>
    <property type="match status" value="1"/>
</dbReference>
<dbReference type="Pfam" id="PF06133">
    <property type="entry name" value="Com_YlbF"/>
    <property type="match status" value="1"/>
</dbReference>
<dbReference type="SUPFAM" id="SSF158622">
    <property type="entry name" value="YheA/YmcA-like"/>
    <property type="match status" value="1"/>
</dbReference>
<proteinExistence type="inferred from homology"/>
<reference key="1">
    <citation type="journal article" date="2001" name="J. Bacteriol.">
        <title>Genome of the bacterium Streptococcus pneumoniae strain R6.</title>
        <authorList>
            <person name="Hoskins J."/>
            <person name="Alborn W.E. Jr."/>
            <person name="Arnold J."/>
            <person name="Blaszczak L.C."/>
            <person name="Burgett S."/>
            <person name="DeHoff B.S."/>
            <person name="Estrem S.T."/>
            <person name="Fritz L."/>
            <person name="Fu D.-J."/>
            <person name="Fuller W."/>
            <person name="Geringer C."/>
            <person name="Gilmour R."/>
            <person name="Glass J.S."/>
            <person name="Khoja H."/>
            <person name="Kraft A.R."/>
            <person name="Lagace R.E."/>
            <person name="LeBlanc D.J."/>
            <person name="Lee L.N."/>
            <person name="Lefkowitz E.J."/>
            <person name="Lu J."/>
            <person name="Matsushima P."/>
            <person name="McAhren S.M."/>
            <person name="McHenney M."/>
            <person name="McLeaster K."/>
            <person name="Mundy C.W."/>
            <person name="Nicas T.I."/>
            <person name="Norris F.H."/>
            <person name="O'Gara M."/>
            <person name="Peery R.B."/>
            <person name="Robertson G.T."/>
            <person name="Rockey P."/>
            <person name="Sun P.-M."/>
            <person name="Winkler M.E."/>
            <person name="Yang Y."/>
            <person name="Young-Bellido M."/>
            <person name="Zhao G."/>
            <person name="Zook C.A."/>
            <person name="Baltz R.H."/>
            <person name="Jaskunas S.R."/>
            <person name="Rosteck P.R. Jr."/>
            <person name="Skatrud P.L."/>
            <person name="Glass J.I."/>
        </authorList>
    </citation>
    <scope>NUCLEOTIDE SEQUENCE [LARGE SCALE GENOMIC DNA]</scope>
    <source>
        <strain>ATCC BAA-255 / R6</strain>
    </source>
</reference>
<keyword id="KW-1185">Reference proteome</keyword>
<accession>Q8DPD3</accession>
<comment type="similarity">
    <text evidence="1">Belongs to the UPF0342 family.</text>
</comment>
<sequence>MSNIYDSANELSRGLRGLPEYKAVKAAKDAIAADAEASKIFTEYLAFQEEIQKLAQTGQMPDASFQAKMEGFGKQIQGNSLLSEFFTKQQQLAIYLSDIEKIVFEPVSELLK</sequence>